<comment type="function">
    <text evidence="2">Photosystem II (PSII) is a light-driven water:plastoquinone oxidoreductase that uses light energy to abstract electrons from H(2)O, generating O(2) and a proton gradient subsequently used for ATP formation. It consists of a core antenna complex that captures photons, and an electron transfer chain that converts photonic excitation into a charge separation. The D1/D2 (PsbA/PsbD) reaction center heterodimer binds P680, the primary electron donor of PSII as well as several subsequent electron acceptors. D2 is needed for assembly of a stable PSII complex.</text>
</comment>
<comment type="catalytic activity">
    <reaction evidence="2">
        <text>2 a plastoquinone + 4 hnu + 2 H2O = 2 a plastoquinol + O2</text>
        <dbReference type="Rhea" id="RHEA:36359"/>
        <dbReference type="Rhea" id="RHEA-COMP:9561"/>
        <dbReference type="Rhea" id="RHEA-COMP:9562"/>
        <dbReference type="ChEBI" id="CHEBI:15377"/>
        <dbReference type="ChEBI" id="CHEBI:15379"/>
        <dbReference type="ChEBI" id="CHEBI:17757"/>
        <dbReference type="ChEBI" id="CHEBI:30212"/>
        <dbReference type="ChEBI" id="CHEBI:62192"/>
        <dbReference type="EC" id="1.10.3.9"/>
    </reaction>
</comment>
<comment type="cofactor">
    <text evidence="2">The D1/D2 heterodimer binds P680, chlorophylls that are the primary electron donor of PSII, and subsequent electron acceptors. It shares a non-heme iron and each subunit binds pheophytin, quinone, additional chlorophylls, carotenoids and lipids. There is also a Cl(-1) ion associated with D1 and D2, which is required for oxygen evolution. The PSII complex binds additional chlorophylls, carotenoids and specific lipids.</text>
</comment>
<comment type="subunit">
    <text evidence="2">PSII is composed of 1 copy each of membrane proteins PsbA, PsbB, PsbC, PsbD, PsbE, PsbF, PsbH, PsbI, PsbJ, PsbK, PsbL, PsbM, PsbT, PsbX, PsbY, PsbZ, Psb30/Ycf12, at least 3 peripheral proteins of the oxygen-evolving complex and a large number of cofactors. It forms dimeric complexes.</text>
</comment>
<comment type="subcellular location">
    <subcellularLocation>
        <location evidence="2">Plastid</location>
        <location evidence="2">Chloroplast thylakoid membrane</location>
        <topology evidence="2">Multi-pass membrane protein</topology>
    </subcellularLocation>
</comment>
<comment type="miscellaneous">
    <text evidence="2">2 of the reaction center chlorophylls (ChlD1 and ChlD2) are entirely coordinated by water.</text>
</comment>
<comment type="similarity">
    <text evidence="2">Belongs to the reaction center PufL/M/PsbA/D family.</text>
</comment>
<geneLocation type="chloroplast"/>
<keyword id="KW-0007">Acetylation</keyword>
<keyword id="KW-0148">Chlorophyll</keyword>
<keyword id="KW-0150">Chloroplast</keyword>
<keyword id="KW-0157">Chromophore</keyword>
<keyword id="KW-0249">Electron transport</keyword>
<keyword id="KW-0408">Iron</keyword>
<keyword id="KW-0460">Magnesium</keyword>
<keyword id="KW-0472">Membrane</keyword>
<keyword id="KW-0479">Metal-binding</keyword>
<keyword id="KW-0560">Oxidoreductase</keyword>
<keyword id="KW-0597">Phosphoprotein</keyword>
<keyword id="KW-0602">Photosynthesis</keyword>
<keyword id="KW-0604">Photosystem II</keyword>
<keyword id="KW-0934">Plastid</keyword>
<keyword id="KW-1185">Reference proteome</keyword>
<keyword id="KW-0793">Thylakoid</keyword>
<keyword id="KW-0812">Transmembrane</keyword>
<keyword id="KW-1133">Transmembrane helix</keyword>
<keyword id="KW-0813">Transport</keyword>
<organism>
    <name type="scientific">Ostreococcus tauri</name>
    <dbReference type="NCBI Taxonomy" id="70448"/>
    <lineage>
        <taxon>Eukaryota</taxon>
        <taxon>Viridiplantae</taxon>
        <taxon>Chlorophyta</taxon>
        <taxon>Mamiellophyceae</taxon>
        <taxon>Mamiellales</taxon>
        <taxon>Bathycoccaceae</taxon>
        <taxon>Ostreococcus</taxon>
    </lineage>
</organism>
<name>PSBD_OSTTA</name>
<reference key="1">
    <citation type="journal article" date="2007" name="Mol. Biol. Evol.">
        <title>The complete chloroplast and mitochondrial DNA sequence of Ostreococcus tauri: organelle genomes of the smallest eukaryote are examples of compaction.</title>
        <authorList>
            <person name="Robbens S."/>
            <person name="Derelle E."/>
            <person name="Ferraz C."/>
            <person name="Wuyts J."/>
            <person name="Moreau H."/>
            <person name="Van de Peer Y."/>
        </authorList>
    </citation>
    <scope>NUCLEOTIDE SEQUENCE [LARGE SCALE GENOMIC DNA]</scope>
    <source>
        <strain>OTTH0595</strain>
    </source>
</reference>
<sequence>MTIALGKVDEKRGWFDNVDDWLKRDRFVFVGWSGILLFPCAYFALGGWLTGTTFVSSWYTHGLASSYLEGCNFLTSAVSTPSNSMAHSLLLLWGPEAQGDFTRWCQLGGLWTFVALHGAFGLIGFMLRQFEIARAVQIRPYNAIAFSAPIAVFVSVFLIYPLGQSGWFFAPSFGVAGIFRFILFFQGFHNWTLNPFHMMGVAGVLGAALLCAIHGATVENTLFEDGDGSNTFRAFNPTQAEETYSMVTANRFWSQIFGVAFSNKRWLHFFMLFVPVTGLWMSALGVVGLALNLRAYDFVSQEIRAAEDPEFETFYTKNILLNEGIRAWMAAQDQPHENLVFPEEVLPRGNAL</sequence>
<gene>
    <name evidence="2" type="primary">psbD</name>
    <name type="ordered locus">OtCpg00020</name>
</gene>
<proteinExistence type="inferred from homology"/>
<dbReference type="EC" id="1.10.3.9" evidence="2"/>
<dbReference type="EMBL" id="CR954199">
    <property type="protein sequence ID" value="CAL36327.1"/>
    <property type="molecule type" value="Genomic_DNA"/>
</dbReference>
<dbReference type="RefSeq" id="YP_717205.1">
    <property type="nucleotide sequence ID" value="NC_008289.1"/>
</dbReference>
<dbReference type="SMR" id="Q0P3Q0"/>
<dbReference type="FunCoup" id="Q0P3Q0">
    <property type="interactions" value="209"/>
</dbReference>
<dbReference type="STRING" id="70448.Q0P3Q0"/>
<dbReference type="GeneID" id="4238883"/>
<dbReference type="KEGG" id="ota:OstapCp02"/>
<dbReference type="eggNOG" id="ENOG502QWJF">
    <property type="taxonomic scope" value="Eukaryota"/>
</dbReference>
<dbReference type="InParanoid" id="Q0P3Q0"/>
<dbReference type="Proteomes" id="UP000009170">
    <property type="component" value="Chloroplast"/>
</dbReference>
<dbReference type="GO" id="GO:0009535">
    <property type="term" value="C:chloroplast thylakoid membrane"/>
    <property type="evidence" value="ECO:0007669"/>
    <property type="project" value="UniProtKB-SubCell"/>
</dbReference>
<dbReference type="GO" id="GO:0009523">
    <property type="term" value="C:photosystem II"/>
    <property type="evidence" value="ECO:0007669"/>
    <property type="project" value="UniProtKB-KW"/>
</dbReference>
<dbReference type="GO" id="GO:0016168">
    <property type="term" value="F:chlorophyll binding"/>
    <property type="evidence" value="ECO:0007669"/>
    <property type="project" value="UniProtKB-UniRule"/>
</dbReference>
<dbReference type="GO" id="GO:0045156">
    <property type="term" value="F:electron transporter, transferring electrons within the cyclic electron transport pathway of photosynthesis activity"/>
    <property type="evidence" value="ECO:0007669"/>
    <property type="project" value="InterPro"/>
</dbReference>
<dbReference type="GO" id="GO:0005506">
    <property type="term" value="F:iron ion binding"/>
    <property type="evidence" value="ECO:0007669"/>
    <property type="project" value="UniProtKB-UniRule"/>
</dbReference>
<dbReference type="GO" id="GO:0010242">
    <property type="term" value="F:oxygen evolving activity"/>
    <property type="evidence" value="ECO:0007669"/>
    <property type="project" value="UniProtKB-EC"/>
</dbReference>
<dbReference type="GO" id="GO:0009772">
    <property type="term" value="P:photosynthetic electron transport in photosystem II"/>
    <property type="evidence" value="ECO:0007669"/>
    <property type="project" value="InterPro"/>
</dbReference>
<dbReference type="CDD" id="cd09288">
    <property type="entry name" value="Photosystem-II_D2"/>
    <property type="match status" value="1"/>
</dbReference>
<dbReference type="FunFam" id="1.20.85.10:FF:000001">
    <property type="entry name" value="photosystem II D2 protein-like"/>
    <property type="match status" value="1"/>
</dbReference>
<dbReference type="Gene3D" id="1.20.85.10">
    <property type="entry name" value="Photosystem II protein D1-like"/>
    <property type="match status" value="1"/>
</dbReference>
<dbReference type="HAMAP" id="MF_01383">
    <property type="entry name" value="PSII_PsbD_D2"/>
    <property type="match status" value="1"/>
</dbReference>
<dbReference type="InterPro" id="IPR055266">
    <property type="entry name" value="D1/D2"/>
</dbReference>
<dbReference type="InterPro" id="IPR036854">
    <property type="entry name" value="Photo_II_D1/D2_sf"/>
</dbReference>
<dbReference type="InterPro" id="IPR000484">
    <property type="entry name" value="Photo_RC_L/M"/>
</dbReference>
<dbReference type="InterPro" id="IPR055265">
    <property type="entry name" value="Photo_RC_L/M_CS"/>
</dbReference>
<dbReference type="InterPro" id="IPR005868">
    <property type="entry name" value="PSII_PsbD/D2"/>
</dbReference>
<dbReference type="NCBIfam" id="TIGR01152">
    <property type="entry name" value="psbD"/>
    <property type="match status" value="1"/>
</dbReference>
<dbReference type="PANTHER" id="PTHR33149:SF12">
    <property type="entry name" value="PHOTOSYSTEM II D2 PROTEIN"/>
    <property type="match status" value="1"/>
</dbReference>
<dbReference type="PANTHER" id="PTHR33149">
    <property type="entry name" value="PHOTOSYSTEM II PROTEIN D1"/>
    <property type="match status" value="1"/>
</dbReference>
<dbReference type="Pfam" id="PF00124">
    <property type="entry name" value="Photo_RC"/>
    <property type="match status" value="1"/>
</dbReference>
<dbReference type="PRINTS" id="PR00256">
    <property type="entry name" value="REACTNCENTRE"/>
</dbReference>
<dbReference type="SUPFAM" id="SSF81483">
    <property type="entry name" value="Bacterial photosystem II reaction centre, L and M subunits"/>
    <property type="match status" value="1"/>
</dbReference>
<dbReference type="PROSITE" id="PS00244">
    <property type="entry name" value="REACTION_CENTER"/>
    <property type="match status" value="1"/>
</dbReference>
<protein>
    <recommendedName>
        <fullName evidence="2">Photosystem II D2 protein</fullName>
        <shortName evidence="2">PSII D2 protein</shortName>
        <ecNumber evidence="2">1.10.3.9</ecNumber>
    </recommendedName>
    <alternativeName>
        <fullName evidence="2">Photosystem Q(A) protein</fullName>
    </alternativeName>
</protein>
<accession>Q0P3Q0</accession>
<evidence type="ECO:0000250" key="1">
    <source>
        <dbReference type="UniProtKB" id="P56761"/>
    </source>
</evidence>
<evidence type="ECO:0000255" key="2">
    <source>
        <dbReference type="HAMAP-Rule" id="MF_01383"/>
    </source>
</evidence>
<feature type="initiator methionine" description="Removed" evidence="1">
    <location>
        <position position="1"/>
    </location>
</feature>
<feature type="chain" id="PRO_0000359681" description="Photosystem II D2 protein">
    <location>
        <begin position="2"/>
        <end position="352"/>
    </location>
</feature>
<feature type="transmembrane region" description="Helical" evidence="2">
    <location>
        <begin position="40"/>
        <end position="60"/>
    </location>
</feature>
<feature type="transmembrane region" description="Helical" evidence="2">
    <location>
        <begin position="124"/>
        <end position="140"/>
    </location>
</feature>
<feature type="transmembrane region" description="Helical" evidence="2">
    <location>
        <begin position="152"/>
        <end position="165"/>
    </location>
</feature>
<feature type="transmembrane region" description="Helical" evidence="2">
    <location>
        <begin position="207"/>
        <end position="227"/>
    </location>
</feature>
<feature type="transmembrane region" description="Helical" evidence="2">
    <location>
        <begin position="278"/>
        <end position="294"/>
    </location>
</feature>
<feature type="binding site" description="axial binding residue" evidence="2">
    <location>
        <position position="117"/>
    </location>
    <ligand>
        <name>chlorophyll a</name>
        <dbReference type="ChEBI" id="CHEBI:58416"/>
        <label>ChlzD2</label>
    </ligand>
    <ligandPart>
        <name>Mg</name>
        <dbReference type="ChEBI" id="CHEBI:25107"/>
    </ligandPart>
</feature>
<feature type="binding site" evidence="2">
    <location>
        <position position="129"/>
    </location>
    <ligand>
        <name>pheophytin a</name>
        <dbReference type="ChEBI" id="CHEBI:136840"/>
        <label>D2</label>
    </ligand>
</feature>
<feature type="binding site" evidence="2">
    <location>
        <position position="142"/>
    </location>
    <ligand>
        <name>pheophytin a</name>
        <dbReference type="ChEBI" id="CHEBI:136840"/>
        <label>D2</label>
    </ligand>
</feature>
<feature type="binding site" description="axial binding residue" evidence="2">
    <location>
        <position position="197"/>
    </location>
    <ligand>
        <name>chlorophyll a</name>
        <dbReference type="ChEBI" id="CHEBI:58416"/>
        <label>PD2</label>
    </ligand>
    <ligandPart>
        <name>Mg</name>
        <dbReference type="ChEBI" id="CHEBI:25107"/>
    </ligandPart>
</feature>
<feature type="binding site" evidence="2">
    <location>
        <position position="214"/>
    </location>
    <ligand>
        <name>a plastoquinone</name>
        <dbReference type="ChEBI" id="CHEBI:17757"/>
        <label>Q(A)</label>
    </ligand>
</feature>
<feature type="binding site" evidence="2">
    <location>
        <position position="214"/>
    </location>
    <ligand>
        <name>Fe cation</name>
        <dbReference type="ChEBI" id="CHEBI:24875"/>
        <note>ligand shared with heterodimeric partner</note>
    </ligand>
</feature>
<feature type="binding site" evidence="2">
    <location>
        <position position="261"/>
    </location>
    <ligand>
        <name>a plastoquinone</name>
        <dbReference type="ChEBI" id="CHEBI:17757"/>
        <label>Q(A)</label>
    </ligand>
</feature>
<feature type="binding site" evidence="2">
    <location>
        <position position="268"/>
    </location>
    <ligand>
        <name>Fe cation</name>
        <dbReference type="ChEBI" id="CHEBI:24875"/>
        <note>ligand shared with heterodimeric partner</note>
    </ligand>
</feature>
<feature type="modified residue" description="N-acetylthreonine" evidence="1">
    <location>
        <position position="2"/>
    </location>
</feature>
<feature type="modified residue" description="Phosphothreonine" evidence="1">
    <location>
        <position position="2"/>
    </location>
</feature>